<sequence length="329" mass="37743">MGAFGLVCSAKDQLTNQAVAVKKIMKPFSTPVLSKRTYRELKLLKHLRHENIISLSDIFISPLEDIYFVTELLGTDLHRLLTSRPLEKQFIQYFLYQILRGLKYIHSAGVVHRDLKPSNILVNENCDLKICDFGLARIQDPQVTGYVSTRYYRAPEIMLTWQKYDVEVDIWSAGCIFAEMLEGKPLFPGKDHVNQFSIITELLGTPPDDVIQTICSENTLRFVQPLPKRERQPLANKFKNAEPEAVDLLENMLVFDPRKRVRAEQALAHPYLAPYHDPTDEPIAEEKFDWSFNDADLPVDTWKIMMYSEILDYHNVDAAAQDAPESNGS</sequence>
<organism>
    <name type="scientific">Exserohilum turcicum</name>
    <name type="common">Northern leaf blight fungus</name>
    <name type="synonym">Setosphaeria turcica</name>
    <dbReference type="NCBI Taxonomy" id="93612"/>
    <lineage>
        <taxon>Eukaryota</taxon>
        <taxon>Fungi</taxon>
        <taxon>Dikarya</taxon>
        <taxon>Ascomycota</taxon>
        <taxon>Pezizomycotina</taxon>
        <taxon>Dothideomycetes</taxon>
        <taxon>Pleosporomycetidae</taxon>
        <taxon>Pleosporales</taxon>
        <taxon>Pleosporineae</taxon>
        <taxon>Pleosporaceae</taxon>
        <taxon>Exserohilum</taxon>
    </lineage>
</organism>
<evidence type="ECO:0000250" key="1"/>
<evidence type="ECO:0000250" key="2">
    <source>
        <dbReference type="UniProtKB" id="P32485"/>
    </source>
</evidence>
<evidence type="ECO:0000250" key="3">
    <source>
        <dbReference type="UniProtKB" id="Q16539"/>
    </source>
</evidence>
<evidence type="ECO:0000250" key="4">
    <source>
        <dbReference type="UniProtKB" id="Q4WSF6"/>
    </source>
</evidence>
<evidence type="ECO:0000255" key="5">
    <source>
        <dbReference type="PROSITE-ProRule" id="PRU00159"/>
    </source>
</evidence>
<evidence type="ECO:0000255" key="6">
    <source>
        <dbReference type="PROSITE-ProRule" id="PRU10027"/>
    </source>
</evidence>
<reference key="1">
    <citation type="submission" date="2006-09" db="EMBL/GenBank/DDBJ databases">
        <authorList>
            <person name="Gu S."/>
            <person name="Fan Y."/>
            <person name="Dong J."/>
        </authorList>
    </citation>
    <scope>NUCLEOTIDE SEQUENCE [MRNA]</scope>
</reference>
<feature type="chain" id="PRO_0000289701" description="Mitogen-activated protein kinase HOG1">
    <location>
        <begin position="1"/>
        <end position="329"/>
    </location>
</feature>
<feature type="domain" description="Protein kinase" evidence="5">
    <location>
        <begin position="1"/>
        <end position="272"/>
    </location>
</feature>
<feature type="short sequence motif" description="TXY">
    <location>
        <begin position="144"/>
        <end position="146"/>
    </location>
</feature>
<feature type="active site" description="Proton acceptor" evidence="5 6">
    <location>
        <position position="114"/>
    </location>
</feature>
<feature type="binding site" evidence="5">
    <location>
        <begin position="1"/>
        <end position="7"/>
    </location>
    <ligand>
        <name>ATP</name>
        <dbReference type="ChEBI" id="CHEBI:30616"/>
    </ligand>
</feature>
<feature type="binding site" evidence="5">
    <location>
        <position position="22"/>
    </location>
    <ligand>
        <name>ATP</name>
        <dbReference type="ChEBI" id="CHEBI:30616"/>
    </ligand>
</feature>
<feature type="modified residue" description="Phosphothreonine" evidence="1">
    <location>
        <position position="144"/>
    </location>
</feature>
<feature type="modified residue" description="Phosphotyrosine" evidence="1">
    <location>
        <position position="146"/>
    </location>
</feature>
<comment type="function">
    <text evidence="4">Proline-directed serine/threonine-protein kinase involved in a signal transduction pathway that is activated by changes in the osmolarity of the extracellular environment. Controls osmotic regulation of transcription of target genes.</text>
</comment>
<comment type="catalytic activity">
    <reaction evidence="2">
        <text>L-seryl-[protein] + ATP = O-phospho-L-seryl-[protein] + ADP + H(+)</text>
        <dbReference type="Rhea" id="RHEA:17989"/>
        <dbReference type="Rhea" id="RHEA-COMP:9863"/>
        <dbReference type="Rhea" id="RHEA-COMP:11604"/>
        <dbReference type="ChEBI" id="CHEBI:15378"/>
        <dbReference type="ChEBI" id="CHEBI:29999"/>
        <dbReference type="ChEBI" id="CHEBI:30616"/>
        <dbReference type="ChEBI" id="CHEBI:83421"/>
        <dbReference type="ChEBI" id="CHEBI:456216"/>
        <dbReference type="EC" id="2.7.11.24"/>
    </reaction>
    <physiologicalReaction direction="left-to-right" evidence="2">
        <dbReference type="Rhea" id="RHEA:17990"/>
    </physiologicalReaction>
</comment>
<comment type="catalytic activity">
    <reaction evidence="2">
        <text>L-threonyl-[protein] + ATP = O-phospho-L-threonyl-[protein] + ADP + H(+)</text>
        <dbReference type="Rhea" id="RHEA:46608"/>
        <dbReference type="Rhea" id="RHEA-COMP:11060"/>
        <dbReference type="Rhea" id="RHEA-COMP:11605"/>
        <dbReference type="ChEBI" id="CHEBI:15378"/>
        <dbReference type="ChEBI" id="CHEBI:30013"/>
        <dbReference type="ChEBI" id="CHEBI:30616"/>
        <dbReference type="ChEBI" id="CHEBI:61977"/>
        <dbReference type="ChEBI" id="CHEBI:456216"/>
        <dbReference type="EC" id="2.7.11.24"/>
    </reaction>
    <physiologicalReaction direction="left-to-right" evidence="2">
        <dbReference type="Rhea" id="RHEA:46609"/>
    </physiologicalReaction>
</comment>
<comment type="cofactor">
    <cofactor evidence="3">
        <name>Mg(2+)</name>
        <dbReference type="ChEBI" id="CHEBI:18420"/>
    </cofactor>
</comment>
<comment type="activity regulation">
    <text evidence="1">Activated by tyrosine and threonine phosphorylation.</text>
</comment>
<comment type="subcellular location">
    <subcellularLocation>
        <location evidence="1">Cytoplasm</location>
    </subcellularLocation>
    <subcellularLocation>
        <location evidence="1">Nucleus</location>
    </subcellularLocation>
</comment>
<comment type="domain">
    <text>The TXY motif contains the threonine and tyrosine residues whose phosphorylation activates the MAP kinases.</text>
</comment>
<comment type="PTM">
    <text evidence="1">Dually phosphorylated on Thr-144 and Tyr-146, which activates the enzyme.</text>
</comment>
<comment type="similarity">
    <text evidence="5">Belongs to the protein kinase superfamily. Ser/Thr protein kinase family. MAP kinase subfamily. HOG1 sub-subfamily.</text>
</comment>
<dbReference type="EC" id="2.7.11.24" evidence="2"/>
<dbReference type="EMBL" id="AY849317">
    <property type="protein sequence ID" value="AAW55999.2"/>
    <property type="molecule type" value="mRNA"/>
</dbReference>
<dbReference type="SMR" id="Q5I6M2"/>
<dbReference type="GO" id="GO:0005737">
    <property type="term" value="C:cytoplasm"/>
    <property type="evidence" value="ECO:0007669"/>
    <property type="project" value="UniProtKB-SubCell"/>
</dbReference>
<dbReference type="GO" id="GO:0005634">
    <property type="term" value="C:nucleus"/>
    <property type="evidence" value="ECO:0007669"/>
    <property type="project" value="UniProtKB-SubCell"/>
</dbReference>
<dbReference type="GO" id="GO:0005524">
    <property type="term" value="F:ATP binding"/>
    <property type="evidence" value="ECO:0007669"/>
    <property type="project" value="UniProtKB-KW"/>
</dbReference>
<dbReference type="GO" id="GO:0004707">
    <property type="term" value="F:MAP kinase activity"/>
    <property type="evidence" value="ECO:0007669"/>
    <property type="project" value="UniProtKB-EC"/>
</dbReference>
<dbReference type="GO" id="GO:0106310">
    <property type="term" value="F:protein serine kinase activity"/>
    <property type="evidence" value="ECO:0007669"/>
    <property type="project" value="RHEA"/>
</dbReference>
<dbReference type="FunFam" id="1.10.510.10:FF:000049">
    <property type="entry name" value="Mitogen-activated protein kinase"/>
    <property type="match status" value="1"/>
</dbReference>
<dbReference type="Gene3D" id="3.30.200.20">
    <property type="entry name" value="Phosphorylase Kinase, domain 1"/>
    <property type="match status" value="1"/>
</dbReference>
<dbReference type="Gene3D" id="1.10.510.10">
    <property type="entry name" value="Transferase(Phosphotransferase) domain 1"/>
    <property type="match status" value="1"/>
</dbReference>
<dbReference type="InterPro" id="IPR011009">
    <property type="entry name" value="Kinase-like_dom_sf"/>
</dbReference>
<dbReference type="InterPro" id="IPR050117">
    <property type="entry name" value="MAP_kinase"/>
</dbReference>
<dbReference type="InterPro" id="IPR003527">
    <property type="entry name" value="MAP_kinase_CS"/>
</dbReference>
<dbReference type="InterPro" id="IPR008352">
    <property type="entry name" value="MAPK_p38-like"/>
</dbReference>
<dbReference type="InterPro" id="IPR000719">
    <property type="entry name" value="Prot_kinase_dom"/>
</dbReference>
<dbReference type="InterPro" id="IPR008271">
    <property type="entry name" value="Ser/Thr_kinase_AS"/>
</dbReference>
<dbReference type="PANTHER" id="PTHR24055">
    <property type="entry name" value="MITOGEN-ACTIVATED PROTEIN KINASE"/>
    <property type="match status" value="1"/>
</dbReference>
<dbReference type="Pfam" id="PF00069">
    <property type="entry name" value="Pkinase"/>
    <property type="match status" value="1"/>
</dbReference>
<dbReference type="PRINTS" id="PR01773">
    <property type="entry name" value="P38MAPKINASE"/>
</dbReference>
<dbReference type="SMART" id="SM00220">
    <property type="entry name" value="S_TKc"/>
    <property type="match status" value="1"/>
</dbReference>
<dbReference type="SUPFAM" id="SSF56112">
    <property type="entry name" value="Protein kinase-like (PK-like)"/>
    <property type="match status" value="1"/>
</dbReference>
<dbReference type="PROSITE" id="PS01351">
    <property type="entry name" value="MAPK"/>
    <property type="match status" value="1"/>
</dbReference>
<dbReference type="PROSITE" id="PS50011">
    <property type="entry name" value="PROTEIN_KINASE_DOM"/>
    <property type="match status" value="1"/>
</dbReference>
<dbReference type="PROSITE" id="PS00108">
    <property type="entry name" value="PROTEIN_KINASE_ST"/>
    <property type="match status" value="1"/>
</dbReference>
<gene>
    <name type="primary">HOG1</name>
    <name type="synonym">STK1</name>
</gene>
<keyword id="KW-0010">Activator</keyword>
<keyword id="KW-0067">ATP-binding</keyword>
<keyword id="KW-0963">Cytoplasm</keyword>
<keyword id="KW-0418">Kinase</keyword>
<keyword id="KW-0547">Nucleotide-binding</keyword>
<keyword id="KW-0539">Nucleus</keyword>
<keyword id="KW-0597">Phosphoprotein</keyword>
<keyword id="KW-0723">Serine/threonine-protein kinase</keyword>
<keyword id="KW-0804">Transcription</keyword>
<keyword id="KW-0805">Transcription regulation</keyword>
<keyword id="KW-0808">Transferase</keyword>
<protein>
    <recommendedName>
        <fullName>Mitogen-activated protein kinase HOG1</fullName>
        <shortName>MAP kinase HOG1</shortName>
        <ecNumber evidence="2">2.7.11.24</ecNumber>
    </recommendedName>
    <alternativeName>
        <fullName>MAP kinase STK1</fullName>
    </alternativeName>
</protein>
<proteinExistence type="evidence at transcript level"/>
<name>HOG1_EXSTU</name>
<accession>Q5I6M2</accession>